<keyword id="KW-0017">Alkaloid metabolism</keyword>
<keyword id="KW-0285">Flavoprotein</keyword>
<keyword id="KW-0288">FMN</keyword>
<keyword id="KW-0521">NADP</keyword>
<evidence type="ECO:0000250" key="1">
    <source>
        <dbReference type="UniProtKB" id="Q02899"/>
    </source>
</evidence>
<evidence type="ECO:0000250" key="2">
    <source>
        <dbReference type="UniProtKB" id="Q4WZ70"/>
    </source>
</evidence>
<evidence type="ECO:0000250" key="3">
    <source>
        <dbReference type="UniProtKB" id="Q50EL0"/>
    </source>
</evidence>
<evidence type="ECO:0000250" key="4">
    <source>
        <dbReference type="UniProtKB" id="Q6ZXC1"/>
    </source>
</evidence>
<evidence type="ECO:0000269" key="5">
    <source>
    </source>
</evidence>
<evidence type="ECO:0000269" key="6">
    <source>
    </source>
</evidence>
<evidence type="ECO:0000303" key="7">
    <source>
    </source>
</evidence>
<evidence type="ECO:0000305" key="8"/>
<comment type="function">
    <text evidence="3 5 6">Probable inactive dehydrogenase; part of the gene cluster that mediates the biosynthesis of fungal ergot alkaloid ergovaline, the predominant ergopeptine product in E.festucae var. lolii (PubMed:17308187). DmaW catalyzes the first step of ergot alkaloid biosynthesis by condensing dimethylallyl diphosphate (DMAP) and tryptophan to form 4-dimethylallyl-L-tryptophan (By similarity). The second step is catalyzed by the methyltransferase easF that methylates 4-dimethylallyl-L-tryptophan in the presence of S-adenosyl-L-methionine, resulting in the formation of 4-dimethylallyl-L-abrine (By similarity). The catalase easC and the FAD-dependent oxidoreductase easE then transform 4-dimethylallyl-L-abrine to chanoclavine-I which is further oxidized by easD in the presence of NAD(+), resulting in the formation of chanoclavine-I aldehyde (By similarity). Agroclavine dehydrogenase easG then mediates the conversion of chanoclavine-I aldehyde to agroclavine via a non-enzymatic adduct reaction: the substrate is an iminium intermediate that is formed spontaneously from chanoclavine-I aldehyde in the presence of glutathione (By similarity). The presence of easA is not required to complete this reaction (By similarity). Further conversion of agroclavine to paspalic acid is a two-step process involving oxidation of agroclavine to elymoclavine and of elymoclavine to paspalic acid, the second step being performed by the elymoclavine oxidase cloA (By similarity). Paspalic acid is then further converted to D-lysergic acid (By similarity). Ergovaline is assembled from D-lysergic acid and three different amino acids by the D-lysergyl-peptide-synthetase composed of a monomudular (lpsB) and a trimodular (lpsA) nonribosomal peptide synthetase subunit (PubMed:11592979, PubMed:17308187).</text>
</comment>
<comment type="induction">
    <text evidence="6">Strongly expressed in planta but not expressed in axenic culture (PubMed:17308187).</text>
</comment>
<comment type="similarity">
    <text evidence="8">Belongs to the NADH:flavin oxidoreductase/NADH oxidase family.</text>
</comment>
<comment type="caution">
    <text evidence="8">In contrast to other members of the family, lacks the conserved Tyr active site at position 176 which is replaced by a Phe residue.</text>
</comment>
<reference key="1">
    <citation type="journal article" date="2007" name="Appl. Environ. Microbiol.">
        <title>A complex ergovaline gene cluster in epichloe endophytes of grasses.</title>
        <authorList>
            <person name="Fleetwood D.J."/>
            <person name="Scott B."/>
            <person name="Lane G.A."/>
            <person name="Tanaka A."/>
            <person name="Johnson R.D."/>
        </authorList>
    </citation>
    <scope>NUCLEOTIDE SEQUENCE [GENOMIC DNA]</scope>
    <scope>FUNCTION</scope>
    <scope>INDUCTION</scope>
    <source>
        <strain>Lp19</strain>
    </source>
</reference>
<reference key="2">
    <citation type="journal article" date="2001" name="Proc. Natl. Acad. Sci. U.S.A.">
        <title>Elimination of ergovaline from a grass-Neotyphodium endophyte symbiosis by genetic modification of the endophyte.</title>
        <authorList>
            <person name="Panaccione D.G."/>
            <person name="Johnson R.D."/>
            <person name="Wang J."/>
            <person name="Young C.A."/>
            <person name="Damrongkool P."/>
            <person name="Scott B."/>
            <person name="Schardl C.L."/>
        </authorList>
    </citation>
    <scope>FUNCTION</scope>
</reference>
<accession>A2TBU0</accession>
<gene>
    <name evidence="7" type="primary">easA</name>
</gene>
<organism>
    <name type="scientific">Epichloe festucae var. lolii</name>
    <name type="common">Neotyphodium lolii</name>
    <name type="synonym">Acremonium lolii</name>
    <dbReference type="NCBI Taxonomy" id="73839"/>
    <lineage>
        <taxon>Eukaryota</taxon>
        <taxon>Fungi</taxon>
        <taxon>Dikarya</taxon>
        <taxon>Ascomycota</taxon>
        <taxon>Pezizomycotina</taxon>
        <taxon>Sordariomycetes</taxon>
        <taxon>Hypocreomycetidae</taxon>
        <taxon>Hypocreales</taxon>
        <taxon>Clavicipitaceae</taxon>
        <taxon>Epichloe</taxon>
    </lineage>
</organism>
<feature type="chain" id="PRO_0000439120" description="Probable inactive reductase easA">
    <location>
        <begin position="1"/>
        <end position="380"/>
    </location>
</feature>
<feature type="binding site" evidence="2">
    <location>
        <begin position="25"/>
        <end position="27"/>
    </location>
    <ligand>
        <name>FMN</name>
        <dbReference type="ChEBI" id="CHEBI:58210"/>
    </ligand>
</feature>
<feature type="binding site" evidence="2">
    <location>
        <position position="60"/>
    </location>
    <ligand>
        <name>FMN</name>
        <dbReference type="ChEBI" id="CHEBI:58210"/>
    </ligand>
</feature>
<feature type="binding site" evidence="2">
    <location>
        <position position="102"/>
    </location>
    <ligand>
        <name>FMN</name>
        <dbReference type="ChEBI" id="CHEBI:58210"/>
    </ligand>
</feature>
<feature type="binding site" evidence="2">
    <location>
        <position position="171"/>
    </location>
    <ligand>
        <name>FMN</name>
        <dbReference type="ChEBI" id="CHEBI:58210"/>
    </ligand>
</feature>
<feature type="binding site" evidence="1">
    <location>
        <position position="171"/>
    </location>
    <ligand>
        <name>substrate</name>
    </ligand>
</feature>
<feature type="binding site" evidence="1">
    <location>
        <position position="174"/>
    </location>
    <ligand>
        <name>substrate</name>
    </ligand>
</feature>
<feature type="binding site" evidence="2">
    <location>
        <position position="223"/>
    </location>
    <ligand>
        <name>FMN</name>
        <dbReference type="ChEBI" id="CHEBI:58210"/>
    </ligand>
</feature>
<feature type="binding site" evidence="2">
    <location>
        <position position="299"/>
    </location>
    <ligand>
        <name>FMN</name>
        <dbReference type="ChEBI" id="CHEBI:58210"/>
    </ligand>
</feature>
<feature type="binding site" evidence="2">
    <location>
        <begin position="324"/>
        <end position="325"/>
    </location>
    <ligand>
        <name>FMN</name>
        <dbReference type="ChEBI" id="CHEBI:58210"/>
    </ligand>
</feature>
<feature type="binding site" evidence="1">
    <location>
        <position position="325"/>
    </location>
    <ligand>
        <name>FMN</name>
        <dbReference type="ChEBI" id="CHEBI:58210"/>
    </ligand>
</feature>
<feature type="binding site" evidence="1">
    <location>
        <position position="352"/>
    </location>
    <ligand>
        <name>substrate</name>
    </ligand>
</feature>
<proteinExistence type="evidence at transcript level"/>
<dbReference type="EMBL" id="EF125025">
    <property type="protein sequence ID" value="ABM91449.1"/>
    <property type="molecule type" value="Genomic_DNA"/>
</dbReference>
<dbReference type="SMR" id="A2TBU0"/>
<dbReference type="GO" id="GO:0010181">
    <property type="term" value="F:FMN binding"/>
    <property type="evidence" value="ECO:0007669"/>
    <property type="project" value="InterPro"/>
</dbReference>
<dbReference type="GO" id="GO:0003959">
    <property type="term" value="F:NADPH dehydrogenase activity"/>
    <property type="evidence" value="ECO:0007669"/>
    <property type="project" value="TreeGrafter"/>
</dbReference>
<dbReference type="GO" id="GO:0009820">
    <property type="term" value="P:alkaloid metabolic process"/>
    <property type="evidence" value="ECO:0007669"/>
    <property type="project" value="UniProtKB-KW"/>
</dbReference>
<dbReference type="CDD" id="cd02933">
    <property type="entry name" value="OYE_like_FMN"/>
    <property type="match status" value="1"/>
</dbReference>
<dbReference type="FunFam" id="3.20.20.70:FF:000138">
    <property type="entry name" value="NADPH dehydrogenase 1"/>
    <property type="match status" value="1"/>
</dbReference>
<dbReference type="Gene3D" id="3.20.20.70">
    <property type="entry name" value="Aldolase class I"/>
    <property type="match status" value="1"/>
</dbReference>
<dbReference type="InterPro" id="IPR013785">
    <property type="entry name" value="Aldolase_TIM"/>
</dbReference>
<dbReference type="InterPro" id="IPR001155">
    <property type="entry name" value="OxRdtase_FMN_N"/>
</dbReference>
<dbReference type="InterPro" id="IPR045247">
    <property type="entry name" value="Oye-like"/>
</dbReference>
<dbReference type="PANTHER" id="PTHR22893">
    <property type="entry name" value="NADH OXIDOREDUCTASE-RELATED"/>
    <property type="match status" value="1"/>
</dbReference>
<dbReference type="PANTHER" id="PTHR22893:SF91">
    <property type="entry name" value="NADPH DEHYDROGENASE 2-RELATED"/>
    <property type="match status" value="1"/>
</dbReference>
<dbReference type="Pfam" id="PF00724">
    <property type="entry name" value="Oxidored_FMN"/>
    <property type="match status" value="1"/>
</dbReference>
<dbReference type="SUPFAM" id="SSF51395">
    <property type="entry name" value="FMN-linked oxidoreductases"/>
    <property type="match status" value="1"/>
</dbReference>
<protein>
    <recommendedName>
        <fullName evidence="4">Probable inactive reductase easA</fullName>
    </recommendedName>
    <alternativeName>
        <fullName evidence="7">Ergot alkaloid synthesis protein A</fullName>
    </alternativeName>
</protein>
<sequence length="380" mass="42697">MSTSNLFTPLQFGKCLLQHKLVLSPMTRFRADNEGVPLPYVKTYYCQRASLPGTLLLTEATAISRRARGFPNVPGIWSQEQIAGWKEVVDAVHAKGSYIWLQLWATGRAAEVGVLKANGFDLVSSSAVPVSPGEPTPRALSDDEINSYIGDFVQAAKNAVLEAGFDGVELHGANGFLIDQFLQSPCNQRTDQWGGCIENRSRFGLEITRRVIDAVGKDHVGMKLSTWSTFQGMGTMDDLIPQFEHFIMRLREIGIAYLHLANSRWVEEEDPTIRTHPDIHNETFVRMWGKEKPVLLAGGYGPESAKLVVDETYSDHKNIGVVFGRHYISNPDLPFRLKMGLPLQKYNRETFYIPFSDEGYLDYPYSEEYITENKKQAVLA</sequence>
<name>EASA_EPIFI</name>